<name>NCAP_WWAVU</name>
<reference key="1">
    <citation type="journal article" date="2001" name="Virology">
        <title>The whitewater arroyo virus: natural evidence for genetic recombination among tacaribe serocomplex viruses (family Arenaviridae).</title>
        <authorList>
            <person name="Charrel R.N."/>
            <person name="de Lamballerie X."/>
            <person name="Fulhorst C.F."/>
        </authorList>
    </citation>
    <scope>NUCLEOTIDE SEQUENCE [GENOMIC RNA]</scope>
</reference>
<reference key="2">
    <citation type="journal article" date="2008" name="Curr. Opin. Microbiol.">
        <title>Phylogeny of the genus Arenavirus.</title>
        <authorList>
            <person name="Charrel R.N."/>
            <person name="de Lamballerie X."/>
            <person name="Emonet S."/>
        </authorList>
    </citation>
    <scope>NUCLEOTIDE SEQUENCE [GENOMIC RNA]</scope>
</reference>
<reference key="3">
    <citation type="journal article" date="2012" name="J. Virol.">
        <title>Arenavirus nucleoprotein targets interferon regulatory factor-activating kinase IKKepsilon.</title>
        <authorList>
            <person name="Pythoud C."/>
            <person name="Rodrigo W.W."/>
            <person name="Pasqual G."/>
            <person name="Rothenberger S."/>
            <person name="Martinez-Sobrido L."/>
            <person name="de la Torre J.C."/>
            <person name="Kunz S."/>
        </authorList>
    </citation>
    <scope>INTERACTION WITH HOST IKBKE</scope>
</reference>
<gene>
    <name evidence="1" type="primary">N</name>
</gene>
<proteinExistence type="evidence at protein level"/>
<protein>
    <recommendedName>
        <fullName evidence="1">Nucleoprotein</fullName>
        <ecNumber evidence="1">3.1.13.-</ecNumber>
    </recommendedName>
    <alternativeName>
        <fullName evidence="1">Nucleocapsid protein</fullName>
    </alternativeName>
    <alternativeName>
        <fullName evidence="1">Protein N</fullName>
    </alternativeName>
</protein>
<feature type="chain" id="PRO_0000361016" description="Nucleoprotein">
    <location>
        <begin position="1"/>
        <end position="562"/>
    </location>
</feature>
<feature type="region of interest" description="Binding site for the cap structure m7GTP" evidence="1">
    <location>
        <begin position="53"/>
        <end position="238"/>
    </location>
</feature>
<feature type="binding site" evidence="1">
    <location>
        <position position="381"/>
    </location>
    <ligand>
        <name>Mn(2+)</name>
        <dbReference type="ChEBI" id="CHEBI:29035"/>
    </ligand>
</feature>
<feature type="binding site" evidence="1">
    <location>
        <position position="383"/>
    </location>
    <ligand>
        <name>Mn(2+)</name>
        <dbReference type="ChEBI" id="CHEBI:29035"/>
    </ligand>
</feature>
<feature type="binding site" evidence="1">
    <location>
        <position position="391"/>
    </location>
    <ligand>
        <name>Zn(2+)</name>
        <dbReference type="ChEBI" id="CHEBI:29105"/>
    </ligand>
</feature>
<feature type="binding site" evidence="1">
    <location>
        <position position="498"/>
    </location>
    <ligand>
        <name>Zn(2+)</name>
        <dbReference type="ChEBI" id="CHEBI:29105"/>
    </ligand>
</feature>
<feature type="binding site" evidence="1">
    <location>
        <position position="501"/>
    </location>
    <ligand>
        <name>Zn(2+)</name>
        <dbReference type="ChEBI" id="CHEBI:29105"/>
    </ligand>
</feature>
<feature type="binding site" evidence="1">
    <location>
        <position position="522"/>
    </location>
    <ligand>
        <name>Zn(2+)</name>
        <dbReference type="ChEBI" id="CHEBI:29105"/>
    </ligand>
</feature>
<feature type="binding site" evidence="1">
    <location>
        <position position="526"/>
    </location>
    <ligand>
        <name>Mn(2+)</name>
        <dbReference type="ChEBI" id="CHEBI:29035"/>
    </ligand>
</feature>
<feature type="site" description="Important for exonuclease activity" evidence="1">
    <location>
        <position position="458"/>
    </location>
</feature>
<comment type="function">
    <text evidence="1">Encapsidates the genome, protecting it from nucleases. The encapsidated genomic RNA is termed the nucleocapsid (NC). Serves as template for viral transcription and replication. The increased presence of protein N in host cell does not seem to trigger the switch from transcription to replication as observed in other negative strain RNA viruses. Through the interaction with host IKBKE, strongly inhibits the phosphorylation and nuclear translocation of host IRF3, a protein involved in interferon activation pathway, leading to the inhibition of interferon-beta and IRF3-dependent promoters activation. Also encodes a functional 3'-5' exoribonuclease that degrades preferentially dsRNA substrates and thereby participates in the suppression of interferon induction.</text>
</comment>
<comment type="subunit">
    <text evidence="1 2">Homomultimerizes to form the nucleocapsid. Binds to viral genomic RNA. Interacts with glycoprotein G2. Interacts with protein Z; this interaction probably directs the encapsidated genome to budding sites. Interacts with protein L; this interaction does not interfere with Z-L interaction. Interacts with host IKBKE (via Protein kinase domain); the interaction inhibits IKBKE kinase activity (PubMed:22532683).</text>
</comment>
<comment type="subcellular location">
    <subcellularLocation>
        <location evidence="1">Virion</location>
    </subcellularLocation>
    <subcellularLocation>
        <location evidence="1">Host cytoplasm</location>
    </subcellularLocation>
</comment>
<comment type="domain">
    <text evidence="1">The N-terminal region is important for the cap-binding activity while the C-terminal region contains the 3'-5' exoribonuclease activity. A CCHE zinc binding site is present in the C-terminal region and may thus contribute to the substrate binding and/or the specificity of the exonuclease activity.</text>
</comment>
<comment type="similarity">
    <text evidence="1">Belongs to the arenaviridae nucleocapsid protein family.</text>
</comment>
<keyword id="KW-0167">Capsid protein</keyword>
<keyword id="KW-1139">Helical capsid protein</keyword>
<keyword id="KW-1035">Host cytoplasm</keyword>
<keyword id="KW-0945">Host-virus interaction</keyword>
<keyword id="KW-0378">Hydrolase</keyword>
<keyword id="KW-1224">Inhibition of host IKBKE by virus</keyword>
<keyword id="KW-1090">Inhibition of host innate immune response by virus</keyword>
<keyword id="KW-1113">Inhibition of host RLR pathway by virus</keyword>
<keyword id="KW-0922">Interferon antiviral system evasion</keyword>
<keyword id="KW-0464">Manganese</keyword>
<keyword id="KW-0479">Metal-binding</keyword>
<keyword id="KW-1185">Reference proteome</keyword>
<keyword id="KW-0687">Ribonucleoprotein</keyword>
<keyword id="KW-0694">RNA-binding</keyword>
<keyword id="KW-0899">Viral immunoevasion</keyword>
<keyword id="KW-0543">Viral nucleoprotein</keyword>
<keyword id="KW-0946">Virion</keyword>
<keyword id="KW-0862">Zinc</keyword>
<organismHost>
    <name type="scientific">Neotoma</name>
    <name type="common">wood rats</name>
    <dbReference type="NCBI Taxonomy" id="42407"/>
</organismHost>
<dbReference type="EC" id="3.1.13.-" evidence="1"/>
<dbReference type="EMBL" id="AF228063">
    <property type="protein sequence ID" value="AAK60498.1"/>
    <property type="molecule type" value="Genomic_RNA"/>
</dbReference>
<dbReference type="RefSeq" id="YP_001911114.1">
    <property type="nucleotide sequence ID" value="NC_010700.1"/>
</dbReference>
<dbReference type="SMR" id="Q91PB2"/>
<dbReference type="KEGG" id="vg:6301279"/>
<dbReference type="OrthoDB" id="3135at10239"/>
<dbReference type="Proteomes" id="UP000009268">
    <property type="component" value="Genome"/>
</dbReference>
<dbReference type="GO" id="GO:0019029">
    <property type="term" value="C:helical viral capsid"/>
    <property type="evidence" value="ECO:0007669"/>
    <property type="project" value="UniProtKB-UniRule"/>
</dbReference>
<dbReference type="GO" id="GO:0030430">
    <property type="term" value="C:host cell cytoplasm"/>
    <property type="evidence" value="ECO:0007669"/>
    <property type="project" value="UniProtKB-SubCell"/>
</dbReference>
<dbReference type="GO" id="GO:1990904">
    <property type="term" value="C:ribonucleoprotein complex"/>
    <property type="evidence" value="ECO:0007669"/>
    <property type="project" value="UniProtKB-KW"/>
</dbReference>
<dbReference type="GO" id="GO:0019013">
    <property type="term" value="C:viral nucleocapsid"/>
    <property type="evidence" value="ECO:0007669"/>
    <property type="project" value="UniProtKB-UniRule"/>
</dbReference>
<dbReference type="GO" id="GO:0016787">
    <property type="term" value="F:hydrolase activity"/>
    <property type="evidence" value="ECO:0007669"/>
    <property type="project" value="UniProtKB-KW"/>
</dbReference>
<dbReference type="GO" id="GO:0046872">
    <property type="term" value="F:metal ion binding"/>
    <property type="evidence" value="ECO:0007669"/>
    <property type="project" value="UniProtKB-UniRule"/>
</dbReference>
<dbReference type="GO" id="GO:0003723">
    <property type="term" value="F:RNA binding"/>
    <property type="evidence" value="ECO:0007669"/>
    <property type="project" value="UniProtKB-UniRule"/>
</dbReference>
<dbReference type="GO" id="GO:0039689">
    <property type="term" value="P:negative stranded viral RNA replication"/>
    <property type="evidence" value="ECO:0000250"/>
    <property type="project" value="UniProtKB"/>
</dbReference>
<dbReference type="GO" id="GO:0039696">
    <property type="term" value="P:RNA-templated viral transcription"/>
    <property type="evidence" value="ECO:0000250"/>
    <property type="project" value="UniProtKB"/>
</dbReference>
<dbReference type="GO" id="GO:0039724">
    <property type="term" value="P:symbiont-mediated suppression of host cytoplasmic pattern recognition receptor signaling pathway via inhibition of IKBKE activity"/>
    <property type="evidence" value="ECO:0007669"/>
    <property type="project" value="UniProtKB-UniRule"/>
</dbReference>
<dbReference type="FunFam" id="1.10.150.550:FF:000001">
    <property type="entry name" value="Nucleoprotein"/>
    <property type="match status" value="1"/>
</dbReference>
<dbReference type="FunFam" id="1.10.150.550:FF:000002">
    <property type="entry name" value="Nucleoprotein"/>
    <property type="match status" value="1"/>
</dbReference>
<dbReference type="FunFam" id="3.30.420.410:FF:000001">
    <property type="entry name" value="Nucleoprotein"/>
    <property type="match status" value="1"/>
</dbReference>
<dbReference type="Gene3D" id="3.30.420.410">
    <property type="entry name" value="Arenaviral nucleoprotein, C-terminal domain"/>
    <property type="match status" value="1"/>
</dbReference>
<dbReference type="Gene3D" id="1.10.150.550">
    <property type="entry name" value="Arenavirus nucleocapsid protein, head domain"/>
    <property type="match status" value="3"/>
</dbReference>
<dbReference type="HAMAP" id="MF_04085">
    <property type="entry name" value="ARENA_NCAP"/>
    <property type="match status" value="1"/>
</dbReference>
<dbReference type="InterPro" id="IPR000229">
    <property type="entry name" value="Nucleocapsid_arenaviridae"/>
</dbReference>
<dbReference type="InterPro" id="IPR035084">
    <property type="entry name" value="Nucleocapsid_C_arenaviridae"/>
</dbReference>
<dbReference type="InterPro" id="IPR038115">
    <property type="entry name" value="Nucleocapsid_C_sf"/>
</dbReference>
<dbReference type="InterPro" id="IPR035083">
    <property type="entry name" value="Nucleocapsid_N_arenaviridae"/>
</dbReference>
<dbReference type="Pfam" id="PF17290">
    <property type="entry name" value="Arena_ncap_C"/>
    <property type="match status" value="1"/>
</dbReference>
<dbReference type="Pfam" id="PF00843">
    <property type="entry name" value="Arena_nucleocap"/>
    <property type="match status" value="1"/>
</dbReference>
<dbReference type="PIRSF" id="PIRSF004029">
    <property type="entry name" value="N_ArenaV"/>
    <property type="match status" value="1"/>
</dbReference>
<evidence type="ECO:0000255" key="1">
    <source>
        <dbReference type="HAMAP-Rule" id="MF_04085"/>
    </source>
</evidence>
<evidence type="ECO:0000269" key="2">
    <source>
    </source>
</evidence>
<organism>
    <name type="scientific">Whitewater Arroyo mammarenavirus (isolate Rat/United States/AV 9310135/1995)</name>
    <name type="common">WWAV</name>
    <dbReference type="NCBI Taxonomy" id="3052331"/>
    <lineage>
        <taxon>Viruses</taxon>
        <taxon>Riboviria</taxon>
        <taxon>Orthornavirae</taxon>
        <taxon>Negarnaviricota</taxon>
        <taxon>Polyploviricotina</taxon>
        <taxon>Ellioviricetes</taxon>
        <taxon>Bunyavirales</taxon>
        <taxon>Arenaviridae</taxon>
        <taxon>Mammarenavirus</taxon>
    </lineage>
</organism>
<accession>Q91PB2</accession>
<sequence>MSDQSVPSFRWTQSLRRGLSAWTTSVKADVLNDTRALLSGLDFAKVASVQRMMRRVKRDDSDLVGLRDLNKEVDSLMIMKSNQKNMFLKVGSLSKDELMELSSDLEKLKQKVQRTERVGNGTGQYQGNLSNTQLTRRSEILQLVGIQRAGLAPTGGVVKIWDIKDPSLLVNQFGSVPAVTISCMTEQGGESLNDVVQGLTDLGLLYTAKYPNLNDLKALTTKHPSLNIITQEESQINISGYNLSLSAAVKAGACLIDGGNMLETIKIEESTFTTVIKTLLEVKNKEKMFVSPTPGQRNPYENVLYKLCLSGDGWPYIASRSQIKGRAWDNTVVEFDTATVKEPIPIRNGGAPLLTTLKPEIENQVKRSVESLLINDTTWIDIEGPPNDPVEFAIYQPESQRYIHCYRRPNDIKSFKDQSKYCHGILLKDVENARPGLISSIIRSLPKSMVFTAQGADDIRKLFDMHGRQDLKIVDVKLSAEESRIFEDLVWKRFEHLCDKHKGIVIKSKKKGSTPATTNAHCALLDGVMFSAVISGSVSNEKPKRMLPIDLLFREPETTVVL</sequence>